<dbReference type="EC" id="4.2.1.19" evidence="1"/>
<dbReference type="EMBL" id="CP000239">
    <property type="protein sequence ID" value="ABD00741.1"/>
    <property type="molecule type" value="Genomic_DNA"/>
</dbReference>
<dbReference type="RefSeq" id="WP_011431413.1">
    <property type="nucleotide sequence ID" value="NC_007775.1"/>
</dbReference>
<dbReference type="SMR" id="Q2JRL0"/>
<dbReference type="STRING" id="321327.CYA_2626"/>
<dbReference type="KEGG" id="cya:CYA_2626"/>
<dbReference type="eggNOG" id="COG0131">
    <property type="taxonomic scope" value="Bacteria"/>
</dbReference>
<dbReference type="HOGENOM" id="CLU_044308_3_0_3"/>
<dbReference type="OrthoDB" id="9790411at2"/>
<dbReference type="UniPathway" id="UPA00031">
    <property type="reaction ID" value="UER00011"/>
</dbReference>
<dbReference type="Proteomes" id="UP000008818">
    <property type="component" value="Chromosome"/>
</dbReference>
<dbReference type="GO" id="GO:0005737">
    <property type="term" value="C:cytoplasm"/>
    <property type="evidence" value="ECO:0007669"/>
    <property type="project" value="UniProtKB-SubCell"/>
</dbReference>
<dbReference type="GO" id="GO:0004424">
    <property type="term" value="F:imidazoleglycerol-phosphate dehydratase activity"/>
    <property type="evidence" value="ECO:0007669"/>
    <property type="project" value="UniProtKB-UniRule"/>
</dbReference>
<dbReference type="GO" id="GO:0000105">
    <property type="term" value="P:L-histidine biosynthetic process"/>
    <property type="evidence" value="ECO:0007669"/>
    <property type="project" value="UniProtKB-UniRule"/>
</dbReference>
<dbReference type="CDD" id="cd07914">
    <property type="entry name" value="IGPD"/>
    <property type="match status" value="1"/>
</dbReference>
<dbReference type="FunFam" id="3.30.230.40:FF:000002">
    <property type="entry name" value="Imidazoleglycerol-phosphate dehydratase"/>
    <property type="match status" value="1"/>
</dbReference>
<dbReference type="FunFam" id="3.30.230.40:FF:000003">
    <property type="entry name" value="Imidazoleglycerol-phosphate dehydratase HisB"/>
    <property type="match status" value="1"/>
</dbReference>
<dbReference type="Gene3D" id="3.30.230.40">
    <property type="entry name" value="Imidazole glycerol phosphate dehydratase, domain 1"/>
    <property type="match status" value="2"/>
</dbReference>
<dbReference type="HAMAP" id="MF_00076">
    <property type="entry name" value="HisB"/>
    <property type="match status" value="1"/>
</dbReference>
<dbReference type="InterPro" id="IPR038494">
    <property type="entry name" value="IGPD_sf"/>
</dbReference>
<dbReference type="InterPro" id="IPR000807">
    <property type="entry name" value="ImidazoleglycerolP_deHydtase"/>
</dbReference>
<dbReference type="InterPro" id="IPR020565">
    <property type="entry name" value="ImidazoleglycerP_deHydtase_CS"/>
</dbReference>
<dbReference type="InterPro" id="IPR020568">
    <property type="entry name" value="Ribosomal_Su5_D2-typ_SF"/>
</dbReference>
<dbReference type="NCBIfam" id="NF002106">
    <property type="entry name" value="PRK00951.1-1"/>
    <property type="match status" value="1"/>
</dbReference>
<dbReference type="NCBIfam" id="NF002108">
    <property type="entry name" value="PRK00951.1-3"/>
    <property type="match status" value="1"/>
</dbReference>
<dbReference type="NCBIfam" id="NF002109">
    <property type="entry name" value="PRK00951.1-5"/>
    <property type="match status" value="1"/>
</dbReference>
<dbReference type="NCBIfam" id="NF002111">
    <property type="entry name" value="PRK00951.2-1"/>
    <property type="match status" value="1"/>
</dbReference>
<dbReference type="NCBIfam" id="NF002114">
    <property type="entry name" value="PRK00951.2-4"/>
    <property type="match status" value="1"/>
</dbReference>
<dbReference type="PANTHER" id="PTHR23133:SF2">
    <property type="entry name" value="IMIDAZOLEGLYCEROL-PHOSPHATE DEHYDRATASE"/>
    <property type="match status" value="1"/>
</dbReference>
<dbReference type="PANTHER" id="PTHR23133">
    <property type="entry name" value="IMIDAZOLEGLYCEROL-PHOSPHATE DEHYDRATASE HIS7"/>
    <property type="match status" value="1"/>
</dbReference>
<dbReference type="Pfam" id="PF00475">
    <property type="entry name" value="IGPD"/>
    <property type="match status" value="1"/>
</dbReference>
<dbReference type="SUPFAM" id="SSF54211">
    <property type="entry name" value="Ribosomal protein S5 domain 2-like"/>
    <property type="match status" value="2"/>
</dbReference>
<dbReference type="PROSITE" id="PS00954">
    <property type="entry name" value="IGP_DEHYDRATASE_1"/>
    <property type="match status" value="1"/>
</dbReference>
<dbReference type="PROSITE" id="PS00955">
    <property type="entry name" value="IGP_DEHYDRATASE_2"/>
    <property type="match status" value="1"/>
</dbReference>
<reference key="1">
    <citation type="journal article" date="2007" name="ISME J.">
        <title>Population level functional diversity in a microbial community revealed by comparative genomic and metagenomic analyses.</title>
        <authorList>
            <person name="Bhaya D."/>
            <person name="Grossman A.R."/>
            <person name="Steunou A.-S."/>
            <person name="Khuri N."/>
            <person name="Cohan F.M."/>
            <person name="Hamamura N."/>
            <person name="Melendrez M.C."/>
            <person name="Bateson M.M."/>
            <person name="Ward D.M."/>
            <person name="Heidelberg J.F."/>
        </authorList>
    </citation>
    <scope>NUCLEOTIDE SEQUENCE [LARGE SCALE GENOMIC DNA]</scope>
    <source>
        <strain>JA-3-3Ab</strain>
    </source>
</reference>
<comment type="catalytic activity">
    <reaction evidence="1">
        <text>D-erythro-1-(imidazol-4-yl)glycerol 3-phosphate = 3-(imidazol-4-yl)-2-oxopropyl phosphate + H2O</text>
        <dbReference type="Rhea" id="RHEA:11040"/>
        <dbReference type="ChEBI" id="CHEBI:15377"/>
        <dbReference type="ChEBI" id="CHEBI:57766"/>
        <dbReference type="ChEBI" id="CHEBI:58278"/>
        <dbReference type="EC" id="4.2.1.19"/>
    </reaction>
</comment>
<comment type="pathway">
    <text evidence="1">Amino-acid biosynthesis; L-histidine biosynthesis; L-histidine from 5-phospho-alpha-D-ribose 1-diphosphate: step 6/9.</text>
</comment>
<comment type="subcellular location">
    <subcellularLocation>
        <location evidence="1">Cytoplasm</location>
    </subcellularLocation>
</comment>
<comment type="similarity">
    <text evidence="1">Belongs to the imidazoleglycerol-phosphate dehydratase family.</text>
</comment>
<gene>
    <name evidence="1" type="primary">hisB</name>
    <name type="ordered locus">CYA_2626</name>
</gene>
<name>HIS7_SYNJA</name>
<feature type="chain" id="PRO_0000336350" description="Imidazoleglycerol-phosphate dehydratase">
    <location>
        <begin position="1"/>
        <end position="206"/>
    </location>
</feature>
<evidence type="ECO:0000255" key="1">
    <source>
        <dbReference type="HAMAP-Rule" id="MF_00076"/>
    </source>
</evidence>
<proteinExistence type="inferred from homology"/>
<sequence>MTALNSTCSLQPRTAFVQRRTAETDVQVRLSLDGKGQHEIDTGIPFLDHMLAQLSTHGLIDLQIKAVGDLHIDDHHTNEDVGIALGQALAQALQDRRGIYRFGHFWAPLDEALVQVVLDFSGRPHLSYGLELTVERIGRYETQLVREFYQAVANHAQMTLHIRQAAGLNAHHIVEASFKAFARALRMAVERDPRRQDGIPSSKGVL</sequence>
<accession>Q2JRL0</accession>
<keyword id="KW-0028">Amino-acid biosynthesis</keyword>
<keyword id="KW-0963">Cytoplasm</keyword>
<keyword id="KW-0368">Histidine biosynthesis</keyword>
<keyword id="KW-0456">Lyase</keyword>
<protein>
    <recommendedName>
        <fullName evidence="1">Imidazoleglycerol-phosphate dehydratase</fullName>
        <shortName evidence="1">IGPD</shortName>
        <ecNumber evidence="1">4.2.1.19</ecNumber>
    </recommendedName>
</protein>
<organism>
    <name type="scientific">Synechococcus sp. (strain JA-3-3Ab)</name>
    <name type="common">Cyanobacteria bacterium Yellowstone A-Prime</name>
    <dbReference type="NCBI Taxonomy" id="321327"/>
    <lineage>
        <taxon>Bacteria</taxon>
        <taxon>Bacillati</taxon>
        <taxon>Cyanobacteriota</taxon>
        <taxon>Cyanophyceae</taxon>
        <taxon>Synechococcales</taxon>
        <taxon>Synechococcaceae</taxon>
        <taxon>Synechococcus</taxon>
    </lineage>
</organism>